<name>DDL_MARSD</name>
<feature type="chain" id="PRO_1000202197" description="D-alanine--D-alanine ligase">
    <location>
        <begin position="1"/>
        <end position="302"/>
    </location>
</feature>
<feature type="domain" description="ATP-grasp" evidence="2">
    <location>
        <begin position="100"/>
        <end position="295"/>
    </location>
</feature>
<feature type="binding site" evidence="2">
    <location>
        <begin position="126"/>
        <end position="180"/>
    </location>
    <ligand>
        <name>ATP</name>
        <dbReference type="ChEBI" id="CHEBI:30616"/>
    </ligand>
</feature>
<feature type="binding site" evidence="2">
    <location>
        <position position="250"/>
    </location>
    <ligand>
        <name>Mg(2+)</name>
        <dbReference type="ChEBI" id="CHEBI:18420"/>
        <label>1</label>
    </ligand>
</feature>
<feature type="binding site" evidence="2">
    <location>
        <position position="262"/>
    </location>
    <ligand>
        <name>Mg(2+)</name>
        <dbReference type="ChEBI" id="CHEBI:18420"/>
        <label>1</label>
    </ligand>
</feature>
<feature type="binding site" evidence="2">
    <location>
        <position position="262"/>
    </location>
    <ligand>
        <name>Mg(2+)</name>
        <dbReference type="ChEBI" id="CHEBI:18420"/>
        <label>2</label>
    </ligand>
</feature>
<feature type="binding site" evidence="2">
    <location>
        <position position="264"/>
    </location>
    <ligand>
        <name>Mg(2+)</name>
        <dbReference type="ChEBI" id="CHEBI:18420"/>
        <label>2</label>
    </ligand>
</feature>
<proteinExistence type="inferred from homology"/>
<sequence>MHVLLIAGGWSEEREVSLSGAKGIEQALLELGHDVEFVDPAKDFKNILLLAEHADFAFINLHGSPGEDGLIQAMLNQVNCPYQGAEPESSFLTLNKAATKTVFDHHGILTPKWELVCAADGCKGLQDLEPPVFIKPNSGGSSLGMTFARTAEELEKGIETVFSLGDSALVEEYTKGIEVTCGILDGEPMPLILINPPDNAEFFDYHSKYALDGAEEICPAPIDPVLTEQIQQITAKAHKLLGLTDYSRADFIISEGVPYLLEVNTLPGMTPTSLVPQAAKEAGYSFNELIAKLIELGQRKRK</sequence>
<gene>
    <name evidence="2" type="primary">ddl</name>
    <name type="ordered locus">Desal_0981</name>
</gene>
<protein>
    <recommendedName>
        <fullName evidence="2">D-alanine--D-alanine ligase</fullName>
        <ecNumber evidence="2">6.3.2.4</ecNumber>
    </recommendedName>
    <alternativeName>
        <fullName evidence="2">D-Ala-D-Ala ligase</fullName>
    </alternativeName>
    <alternativeName>
        <fullName evidence="2">D-alanylalanine synthetase</fullName>
    </alternativeName>
</protein>
<keyword id="KW-0067">ATP-binding</keyword>
<keyword id="KW-0133">Cell shape</keyword>
<keyword id="KW-0961">Cell wall biogenesis/degradation</keyword>
<keyword id="KW-0963">Cytoplasm</keyword>
<keyword id="KW-0436">Ligase</keyword>
<keyword id="KW-0460">Magnesium</keyword>
<keyword id="KW-0464">Manganese</keyword>
<keyword id="KW-0479">Metal-binding</keyword>
<keyword id="KW-0547">Nucleotide-binding</keyword>
<keyword id="KW-0573">Peptidoglycan synthesis</keyword>
<keyword id="KW-1185">Reference proteome</keyword>
<dbReference type="EC" id="6.3.2.4" evidence="2"/>
<dbReference type="EMBL" id="CP001649">
    <property type="protein sequence ID" value="ACS79046.1"/>
    <property type="molecule type" value="Genomic_DNA"/>
</dbReference>
<dbReference type="RefSeq" id="WP_015850865.1">
    <property type="nucleotide sequence ID" value="NC_012881.1"/>
</dbReference>
<dbReference type="SMR" id="C6C0B2"/>
<dbReference type="STRING" id="526222.Desal_0981"/>
<dbReference type="KEGG" id="dsa:Desal_0981"/>
<dbReference type="eggNOG" id="COG1181">
    <property type="taxonomic scope" value="Bacteria"/>
</dbReference>
<dbReference type="HOGENOM" id="CLU_039268_1_1_7"/>
<dbReference type="OrthoDB" id="9813261at2"/>
<dbReference type="UniPathway" id="UPA00219"/>
<dbReference type="Proteomes" id="UP000002601">
    <property type="component" value="Chromosome"/>
</dbReference>
<dbReference type="GO" id="GO:0005737">
    <property type="term" value="C:cytoplasm"/>
    <property type="evidence" value="ECO:0007669"/>
    <property type="project" value="UniProtKB-SubCell"/>
</dbReference>
<dbReference type="GO" id="GO:0005524">
    <property type="term" value="F:ATP binding"/>
    <property type="evidence" value="ECO:0007669"/>
    <property type="project" value="UniProtKB-KW"/>
</dbReference>
<dbReference type="GO" id="GO:0008716">
    <property type="term" value="F:D-alanine-D-alanine ligase activity"/>
    <property type="evidence" value="ECO:0007669"/>
    <property type="project" value="UniProtKB-UniRule"/>
</dbReference>
<dbReference type="GO" id="GO:0046872">
    <property type="term" value="F:metal ion binding"/>
    <property type="evidence" value="ECO:0007669"/>
    <property type="project" value="UniProtKB-KW"/>
</dbReference>
<dbReference type="GO" id="GO:0071555">
    <property type="term" value="P:cell wall organization"/>
    <property type="evidence" value="ECO:0007669"/>
    <property type="project" value="UniProtKB-KW"/>
</dbReference>
<dbReference type="GO" id="GO:0009252">
    <property type="term" value="P:peptidoglycan biosynthetic process"/>
    <property type="evidence" value="ECO:0007669"/>
    <property type="project" value="UniProtKB-UniRule"/>
</dbReference>
<dbReference type="GO" id="GO:0008360">
    <property type="term" value="P:regulation of cell shape"/>
    <property type="evidence" value="ECO:0007669"/>
    <property type="project" value="UniProtKB-KW"/>
</dbReference>
<dbReference type="Gene3D" id="3.40.50.20">
    <property type="match status" value="1"/>
</dbReference>
<dbReference type="Gene3D" id="3.30.1490.20">
    <property type="entry name" value="ATP-grasp fold, A domain"/>
    <property type="match status" value="1"/>
</dbReference>
<dbReference type="Gene3D" id="3.30.470.20">
    <property type="entry name" value="ATP-grasp fold, B domain"/>
    <property type="match status" value="1"/>
</dbReference>
<dbReference type="HAMAP" id="MF_00047">
    <property type="entry name" value="Dala_Dala_lig"/>
    <property type="match status" value="1"/>
</dbReference>
<dbReference type="InterPro" id="IPR011761">
    <property type="entry name" value="ATP-grasp"/>
</dbReference>
<dbReference type="InterPro" id="IPR013815">
    <property type="entry name" value="ATP_grasp_subdomain_1"/>
</dbReference>
<dbReference type="InterPro" id="IPR000291">
    <property type="entry name" value="D-Ala_lig_Van_CS"/>
</dbReference>
<dbReference type="InterPro" id="IPR005905">
    <property type="entry name" value="D_ala_D_ala"/>
</dbReference>
<dbReference type="InterPro" id="IPR011095">
    <property type="entry name" value="Dala_Dala_lig_C"/>
</dbReference>
<dbReference type="InterPro" id="IPR016185">
    <property type="entry name" value="PreATP-grasp_dom_sf"/>
</dbReference>
<dbReference type="NCBIfam" id="TIGR01205">
    <property type="entry name" value="D_ala_D_alaTIGR"/>
    <property type="match status" value="1"/>
</dbReference>
<dbReference type="NCBIfam" id="NF002378">
    <property type="entry name" value="PRK01372.1"/>
    <property type="match status" value="1"/>
</dbReference>
<dbReference type="PANTHER" id="PTHR23132">
    <property type="entry name" value="D-ALANINE--D-ALANINE LIGASE"/>
    <property type="match status" value="1"/>
</dbReference>
<dbReference type="PANTHER" id="PTHR23132:SF23">
    <property type="entry name" value="D-ALANINE--D-ALANINE LIGASE B"/>
    <property type="match status" value="1"/>
</dbReference>
<dbReference type="Pfam" id="PF07478">
    <property type="entry name" value="Dala_Dala_lig_C"/>
    <property type="match status" value="1"/>
</dbReference>
<dbReference type="PIRSF" id="PIRSF039102">
    <property type="entry name" value="Ddl/VanB"/>
    <property type="match status" value="1"/>
</dbReference>
<dbReference type="SUPFAM" id="SSF56059">
    <property type="entry name" value="Glutathione synthetase ATP-binding domain-like"/>
    <property type="match status" value="1"/>
</dbReference>
<dbReference type="SUPFAM" id="SSF52440">
    <property type="entry name" value="PreATP-grasp domain"/>
    <property type="match status" value="1"/>
</dbReference>
<dbReference type="PROSITE" id="PS50975">
    <property type="entry name" value="ATP_GRASP"/>
    <property type="match status" value="1"/>
</dbReference>
<dbReference type="PROSITE" id="PS00843">
    <property type="entry name" value="DALA_DALA_LIGASE_1"/>
    <property type="match status" value="1"/>
</dbReference>
<dbReference type="PROSITE" id="PS00844">
    <property type="entry name" value="DALA_DALA_LIGASE_2"/>
    <property type="match status" value="1"/>
</dbReference>
<comment type="function">
    <text evidence="2">Cell wall formation.</text>
</comment>
<comment type="catalytic activity">
    <reaction evidence="2">
        <text>2 D-alanine + ATP = D-alanyl-D-alanine + ADP + phosphate + H(+)</text>
        <dbReference type="Rhea" id="RHEA:11224"/>
        <dbReference type="ChEBI" id="CHEBI:15378"/>
        <dbReference type="ChEBI" id="CHEBI:30616"/>
        <dbReference type="ChEBI" id="CHEBI:43474"/>
        <dbReference type="ChEBI" id="CHEBI:57416"/>
        <dbReference type="ChEBI" id="CHEBI:57822"/>
        <dbReference type="ChEBI" id="CHEBI:456216"/>
        <dbReference type="EC" id="6.3.2.4"/>
    </reaction>
</comment>
<comment type="cofactor">
    <cofactor evidence="1">
        <name>Mg(2+)</name>
        <dbReference type="ChEBI" id="CHEBI:18420"/>
    </cofactor>
    <cofactor evidence="1">
        <name>Mn(2+)</name>
        <dbReference type="ChEBI" id="CHEBI:29035"/>
    </cofactor>
    <text evidence="1">Binds 2 magnesium or manganese ions per subunit.</text>
</comment>
<comment type="pathway">
    <text evidence="2">Cell wall biogenesis; peptidoglycan biosynthesis.</text>
</comment>
<comment type="subcellular location">
    <subcellularLocation>
        <location evidence="2">Cytoplasm</location>
    </subcellularLocation>
</comment>
<comment type="similarity">
    <text evidence="2">Belongs to the D-alanine--D-alanine ligase family.</text>
</comment>
<organism>
    <name type="scientific">Maridesulfovibrio salexigens (strain ATCC 14822 / DSM 2638 / NCIMB 8403 / VKM B-1763)</name>
    <name type="common">Desulfovibrio salexigens</name>
    <dbReference type="NCBI Taxonomy" id="526222"/>
    <lineage>
        <taxon>Bacteria</taxon>
        <taxon>Pseudomonadati</taxon>
        <taxon>Thermodesulfobacteriota</taxon>
        <taxon>Desulfovibrionia</taxon>
        <taxon>Desulfovibrionales</taxon>
        <taxon>Desulfovibrionaceae</taxon>
        <taxon>Maridesulfovibrio</taxon>
    </lineage>
</organism>
<evidence type="ECO:0000250" key="1"/>
<evidence type="ECO:0000255" key="2">
    <source>
        <dbReference type="HAMAP-Rule" id="MF_00047"/>
    </source>
</evidence>
<reference key="1">
    <citation type="submission" date="2009-06" db="EMBL/GenBank/DDBJ databases">
        <title>Complete sequence of Desulfovibrio salexigens DSM 2638.</title>
        <authorList>
            <consortium name="US DOE Joint Genome Institute"/>
            <person name="Lucas S."/>
            <person name="Copeland A."/>
            <person name="Lapidus A."/>
            <person name="Glavina del Rio T."/>
            <person name="Tice H."/>
            <person name="Bruce D."/>
            <person name="Goodwin L."/>
            <person name="Pitluck S."/>
            <person name="Munk A.C."/>
            <person name="Brettin T."/>
            <person name="Detter J.C."/>
            <person name="Han C."/>
            <person name="Tapia R."/>
            <person name="Larimer F."/>
            <person name="Land M."/>
            <person name="Hauser L."/>
            <person name="Kyrpides N."/>
            <person name="Anderson I."/>
            <person name="Wall J.D."/>
            <person name="Arkin A.P."/>
            <person name="Dehal P."/>
            <person name="Chivian D."/>
            <person name="Giles B."/>
            <person name="Hazen T.C."/>
        </authorList>
    </citation>
    <scope>NUCLEOTIDE SEQUENCE [LARGE SCALE GENOMIC DNA]</scope>
    <source>
        <strain>ATCC 14822 / DSM 2638 / NCIMB 8403 / VKM B-1763</strain>
    </source>
</reference>
<accession>C6C0B2</accession>